<accession>A8ADU4</accession>
<protein>
    <recommendedName>
        <fullName evidence="1">UPF0304 protein CKO_00501</fullName>
    </recommendedName>
</protein>
<gene>
    <name type="ordered locus">CKO_00501</name>
</gene>
<evidence type="ECO:0000255" key="1">
    <source>
        <dbReference type="HAMAP-Rule" id="MF_00762"/>
    </source>
</evidence>
<comment type="similarity">
    <text evidence="1">Belongs to the UPF0304 family.</text>
</comment>
<keyword id="KW-1185">Reference proteome</keyword>
<name>Y501_CITK8</name>
<proteinExistence type="inferred from homology"/>
<dbReference type="EMBL" id="CP000822">
    <property type="protein sequence ID" value="ABV11657.1"/>
    <property type="molecule type" value="Genomic_DNA"/>
</dbReference>
<dbReference type="RefSeq" id="WP_012131483.1">
    <property type="nucleotide sequence ID" value="NC_009792.1"/>
</dbReference>
<dbReference type="SMR" id="A8ADU4"/>
<dbReference type="STRING" id="290338.CKO_00501"/>
<dbReference type="GeneID" id="45134744"/>
<dbReference type="KEGG" id="cko:CKO_00501"/>
<dbReference type="HOGENOM" id="CLU_101021_1_0_6"/>
<dbReference type="OrthoDB" id="5589463at2"/>
<dbReference type="Proteomes" id="UP000008148">
    <property type="component" value="Chromosome"/>
</dbReference>
<dbReference type="FunFam" id="1.10.3190.10:FF:000001">
    <property type="entry name" value="UPF0304 protein YfbU"/>
    <property type="match status" value="1"/>
</dbReference>
<dbReference type="Gene3D" id="1.10.287.680">
    <property type="entry name" value="Helix hairpin bin"/>
    <property type="match status" value="1"/>
</dbReference>
<dbReference type="Gene3D" id="1.10.3190.10">
    <property type="entry name" value="yfbu gene product, domain 2"/>
    <property type="match status" value="1"/>
</dbReference>
<dbReference type="HAMAP" id="MF_00762">
    <property type="entry name" value="UPF0304"/>
    <property type="match status" value="1"/>
</dbReference>
<dbReference type="InterPro" id="IPR005587">
    <property type="entry name" value="UPF0304_YfbU"/>
</dbReference>
<dbReference type="InterPro" id="IPR023146">
    <property type="entry name" value="YfbU_alpha-helical_sf"/>
</dbReference>
<dbReference type="InterPro" id="IPR023145">
    <property type="entry name" value="YfbU_helix-hairpin_sf"/>
</dbReference>
<dbReference type="NCBIfam" id="NF003936">
    <property type="entry name" value="PRK05445.1"/>
    <property type="match status" value="1"/>
</dbReference>
<dbReference type="Pfam" id="PF03887">
    <property type="entry name" value="YfbU"/>
    <property type="match status" value="1"/>
</dbReference>
<dbReference type="PIRSF" id="PIRSF006272">
    <property type="entry name" value="UCP006272"/>
    <property type="match status" value="1"/>
</dbReference>
<dbReference type="SUPFAM" id="SSF116960">
    <property type="entry name" value="YfbU-like"/>
    <property type="match status" value="1"/>
</dbReference>
<reference key="1">
    <citation type="submission" date="2007-08" db="EMBL/GenBank/DDBJ databases">
        <authorList>
            <consortium name="The Citrobacter koseri Genome Sequencing Project"/>
            <person name="McClelland M."/>
            <person name="Sanderson E.K."/>
            <person name="Porwollik S."/>
            <person name="Spieth J."/>
            <person name="Clifton W.S."/>
            <person name="Latreille P."/>
            <person name="Courtney L."/>
            <person name="Wang C."/>
            <person name="Pepin K."/>
            <person name="Bhonagiri V."/>
            <person name="Nash W."/>
            <person name="Johnson M."/>
            <person name="Thiruvilangam P."/>
            <person name="Wilson R."/>
        </authorList>
    </citation>
    <scope>NUCLEOTIDE SEQUENCE [LARGE SCALE GENOMIC DNA]</scope>
    <source>
        <strain>ATCC BAA-895 / CDC 4225-83 / SGSC4696</strain>
    </source>
</reference>
<sequence length="164" mass="19569">MEMTNAQRLILSNQYKMMTMLDPTNAERYRRLQTIIERGYGLQMRELDREFGELKEETCRTIIDIMEMYHALHVSWTNLKDAQTIDERRVTFLGFDAATEARYLGYVRFMVNVEGRYTHFDAGTHGFNAQTPMWEKYQRMLNVWHSCPRQYHLSSNEINQIINA</sequence>
<organism>
    <name type="scientific">Citrobacter koseri (strain ATCC BAA-895 / CDC 4225-83 / SGSC4696)</name>
    <dbReference type="NCBI Taxonomy" id="290338"/>
    <lineage>
        <taxon>Bacteria</taxon>
        <taxon>Pseudomonadati</taxon>
        <taxon>Pseudomonadota</taxon>
        <taxon>Gammaproteobacteria</taxon>
        <taxon>Enterobacterales</taxon>
        <taxon>Enterobacteriaceae</taxon>
        <taxon>Citrobacter</taxon>
    </lineage>
</organism>
<feature type="chain" id="PRO_1000046759" description="UPF0304 protein CKO_00501">
    <location>
        <begin position="1"/>
        <end position="164"/>
    </location>
</feature>